<evidence type="ECO:0000255" key="1">
    <source>
        <dbReference type="HAMAP-Rule" id="MF_00069"/>
    </source>
</evidence>
<keyword id="KW-0004">4Fe-4S</keyword>
<keyword id="KW-0963">Cytoplasm</keyword>
<keyword id="KW-0408">Iron</keyword>
<keyword id="KW-0411">Iron-sulfur</keyword>
<keyword id="KW-0479">Metal-binding</keyword>
<keyword id="KW-0560">Oxidoreductase</keyword>
<organism>
    <name type="scientific">Clostridium botulinum (strain Loch Maree / Type A3)</name>
    <dbReference type="NCBI Taxonomy" id="498214"/>
    <lineage>
        <taxon>Bacteria</taxon>
        <taxon>Bacillati</taxon>
        <taxon>Bacillota</taxon>
        <taxon>Clostridia</taxon>
        <taxon>Eubacteriales</taxon>
        <taxon>Clostridiaceae</taxon>
        <taxon>Clostridium</taxon>
    </lineage>
</organism>
<name>HCP_CLOBM</name>
<sequence length="570" mass="62885">MSMFCYQCQEAAGGRGCTVKGVCGKTEDIAKTQDLIIYVVKGIAIYSSQAREIGLNTSEADKFIVESLFSTITNANFDAKTLNARVQEGLKIKQSLKDAIIKAGGSYNSKENKSWTSKFLSVLGIKNDKDEKEIHDAAVWAANNPEDFKKKAETVGVLATENEDIRSLRELLTYGLKGMAAYLEHANNLGYDEDSIHAFMEKALVATLDDTLSADELTALVLECGKYGVDVMALLDKANTSTYGNPEITKVNIGVRNNPGILISGHDLKDMEELLKQTEGTGVDVYTHSEMLPANYYPAFKKYKHFVGNYGNAWWKQNEEFEDFNGPILMTTNCIVTPKASYKDRIYTTGVTGFEGVKHINPSKDGKKDFSEIIEHAKRCASPKEIEKGEIIGGFAHNQVLALAPQVVDAVKTGAIKRFFVMAGCDGRMKSRNYYTDFAKELPKDTVILTAGCAKYKYNKLDLGDINGIPRVLDAGQCNDSYSLAVIALKLKEVFELEDINELPISYNIAWYEQKAVIVLLALLHLGVKNIHLGPTLPAFLSPNVAKILVENFGIGTISSVDEDIKMFMN</sequence>
<reference key="1">
    <citation type="journal article" date="2007" name="PLoS ONE">
        <title>Analysis of the neurotoxin complex genes in Clostridium botulinum A1-A4 and B1 strains: BoNT/A3, /Ba4 and /B1 clusters are located within plasmids.</title>
        <authorList>
            <person name="Smith T.J."/>
            <person name="Hill K.K."/>
            <person name="Foley B.T."/>
            <person name="Detter J.C."/>
            <person name="Munk A.C."/>
            <person name="Bruce D.C."/>
            <person name="Doggett N.A."/>
            <person name="Smith L.A."/>
            <person name="Marks J.D."/>
            <person name="Xie G."/>
            <person name="Brettin T.S."/>
        </authorList>
    </citation>
    <scope>NUCLEOTIDE SEQUENCE [LARGE SCALE GENOMIC DNA]</scope>
    <source>
        <strain>Loch Maree / Type A3</strain>
    </source>
</reference>
<proteinExistence type="inferred from homology"/>
<accession>B1KYK8</accession>
<protein>
    <recommendedName>
        <fullName evidence="1">Hydroxylamine reductase</fullName>
        <ecNumber evidence="1">1.7.99.1</ecNumber>
    </recommendedName>
    <alternativeName>
        <fullName evidence="1">Hybrid-cluster protein</fullName>
        <shortName evidence="1">HCP</shortName>
    </alternativeName>
    <alternativeName>
        <fullName evidence="1">Prismane protein</fullName>
    </alternativeName>
</protein>
<dbReference type="EC" id="1.7.99.1" evidence="1"/>
<dbReference type="EMBL" id="CP000962">
    <property type="protein sequence ID" value="ACA54498.1"/>
    <property type="molecule type" value="Genomic_DNA"/>
</dbReference>
<dbReference type="RefSeq" id="WP_012342594.1">
    <property type="nucleotide sequence ID" value="NC_010520.1"/>
</dbReference>
<dbReference type="SMR" id="B1KYK8"/>
<dbReference type="KEGG" id="cbl:CLK_2177"/>
<dbReference type="HOGENOM" id="CLU_038344_2_0_9"/>
<dbReference type="GO" id="GO:0005737">
    <property type="term" value="C:cytoplasm"/>
    <property type="evidence" value="ECO:0007669"/>
    <property type="project" value="UniProtKB-SubCell"/>
</dbReference>
<dbReference type="GO" id="GO:0051539">
    <property type="term" value="F:4 iron, 4 sulfur cluster binding"/>
    <property type="evidence" value="ECO:0007669"/>
    <property type="project" value="UniProtKB-KW"/>
</dbReference>
<dbReference type="GO" id="GO:0050418">
    <property type="term" value="F:hydroxylamine reductase activity"/>
    <property type="evidence" value="ECO:0007669"/>
    <property type="project" value="UniProtKB-UniRule"/>
</dbReference>
<dbReference type="GO" id="GO:0046872">
    <property type="term" value="F:metal ion binding"/>
    <property type="evidence" value="ECO:0007669"/>
    <property type="project" value="UniProtKB-KW"/>
</dbReference>
<dbReference type="GO" id="GO:0004601">
    <property type="term" value="F:peroxidase activity"/>
    <property type="evidence" value="ECO:0007669"/>
    <property type="project" value="TreeGrafter"/>
</dbReference>
<dbReference type="GO" id="GO:0042542">
    <property type="term" value="P:response to hydrogen peroxide"/>
    <property type="evidence" value="ECO:0007669"/>
    <property type="project" value="TreeGrafter"/>
</dbReference>
<dbReference type="CDD" id="cd01914">
    <property type="entry name" value="HCP"/>
    <property type="match status" value="1"/>
</dbReference>
<dbReference type="FunFam" id="1.20.1270.20:FF:000001">
    <property type="entry name" value="Hydroxylamine reductase"/>
    <property type="match status" value="1"/>
</dbReference>
<dbReference type="FunFam" id="1.20.1270.20:FF:000003">
    <property type="entry name" value="Hydroxylamine reductase"/>
    <property type="match status" value="1"/>
</dbReference>
<dbReference type="FunFam" id="3.40.50.2030:FF:000001">
    <property type="entry name" value="Hydroxylamine reductase"/>
    <property type="match status" value="1"/>
</dbReference>
<dbReference type="FunFam" id="3.40.50.2030:FF:000002">
    <property type="entry name" value="Hydroxylamine reductase"/>
    <property type="match status" value="1"/>
</dbReference>
<dbReference type="Gene3D" id="1.20.1270.20">
    <property type="match status" value="2"/>
</dbReference>
<dbReference type="Gene3D" id="3.40.50.2030">
    <property type="match status" value="2"/>
</dbReference>
<dbReference type="HAMAP" id="MF_00069">
    <property type="entry name" value="Hydroxylam_reduct"/>
    <property type="match status" value="1"/>
</dbReference>
<dbReference type="InterPro" id="IPR004137">
    <property type="entry name" value="HCP/CODH"/>
</dbReference>
<dbReference type="InterPro" id="IPR010048">
    <property type="entry name" value="Hydroxylam_reduct"/>
</dbReference>
<dbReference type="InterPro" id="IPR016099">
    <property type="entry name" value="Prismane-like_a/b-sand"/>
</dbReference>
<dbReference type="InterPro" id="IPR011254">
    <property type="entry name" value="Prismane-like_sf"/>
</dbReference>
<dbReference type="InterPro" id="IPR016100">
    <property type="entry name" value="Prismane_a-bundle"/>
</dbReference>
<dbReference type="NCBIfam" id="TIGR01703">
    <property type="entry name" value="hybrid_clust"/>
    <property type="match status" value="1"/>
</dbReference>
<dbReference type="NCBIfam" id="NF003658">
    <property type="entry name" value="PRK05290.1"/>
    <property type="match status" value="1"/>
</dbReference>
<dbReference type="PANTHER" id="PTHR30109">
    <property type="entry name" value="HYDROXYLAMINE REDUCTASE"/>
    <property type="match status" value="1"/>
</dbReference>
<dbReference type="PANTHER" id="PTHR30109:SF0">
    <property type="entry name" value="HYDROXYLAMINE REDUCTASE"/>
    <property type="match status" value="1"/>
</dbReference>
<dbReference type="Pfam" id="PF03063">
    <property type="entry name" value="Prismane"/>
    <property type="match status" value="1"/>
</dbReference>
<dbReference type="PIRSF" id="PIRSF000076">
    <property type="entry name" value="HCP"/>
    <property type="match status" value="1"/>
</dbReference>
<dbReference type="SUPFAM" id="SSF56821">
    <property type="entry name" value="Prismane protein-like"/>
    <property type="match status" value="1"/>
</dbReference>
<feature type="chain" id="PRO_1000092332" description="Hydroxylamine reductase">
    <location>
        <begin position="1"/>
        <end position="570"/>
    </location>
</feature>
<feature type="binding site" evidence="1">
    <location>
        <position position="5"/>
    </location>
    <ligand>
        <name>[4Fe-4S] cluster</name>
        <dbReference type="ChEBI" id="CHEBI:49883"/>
    </ligand>
</feature>
<feature type="binding site" evidence="1">
    <location>
        <position position="8"/>
    </location>
    <ligand>
        <name>[4Fe-4S] cluster</name>
        <dbReference type="ChEBI" id="CHEBI:49883"/>
    </ligand>
</feature>
<feature type="binding site" evidence="1">
    <location>
        <position position="17"/>
    </location>
    <ligand>
        <name>[4Fe-4S] cluster</name>
        <dbReference type="ChEBI" id="CHEBI:49883"/>
    </ligand>
</feature>
<feature type="binding site" evidence="1">
    <location>
        <position position="23"/>
    </location>
    <ligand>
        <name>[4Fe-4S] cluster</name>
        <dbReference type="ChEBI" id="CHEBI:49883"/>
    </ligand>
</feature>
<feature type="binding site" evidence="1">
    <location>
        <position position="266"/>
    </location>
    <ligand>
        <name>hybrid [4Fe-2O-2S] cluster</name>
        <dbReference type="ChEBI" id="CHEBI:60519"/>
    </ligand>
</feature>
<feature type="binding site" evidence="1">
    <location>
        <position position="290"/>
    </location>
    <ligand>
        <name>hybrid [4Fe-2O-2S] cluster</name>
        <dbReference type="ChEBI" id="CHEBI:60519"/>
    </ligand>
</feature>
<feature type="binding site" evidence="1">
    <location>
        <position position="334"/>
    </location>
    <ligand>
        <name>hybrid [4Fe-2O-2S] cluster</name>
        <dbReference type="ChEBI" id="CHEBI:60519"/>
    </ligand>
</feature>
<feature type="binding site" description="via persulfide group" evidence="1">
    <location>
        <position position="425"/>
    </location>
    <ligand>
        <name>hybrid [4Fe-2O-2S] cluster</name>
        <dbReference type="ChEBI" id="CHEBI:60519"/>
    </ligand>
</feature>
<feature type="binding site" evidence="1">
    <location>
        <position position="453"/>
    </location>
    <ligand>
        <name>hybrid [4Fe-2O-2S] cluster</name>
        <dbReference type="ChEBI" id="CHEBI:60519"/>
    </ligand>
</feature>
<feature type="binding site" evidence="1">
    <location>
        <position position="478"/>
    </location>
    <ligand>
        <name>hybrid [4Fe-2O-2S] cluster</name>
        <dbReference type="ChEBI" id="CHEBI:60519"/>
    </ligand>
</feature>
<feature type="binding site" evidence="1">
    <location>
        <position position="513"/>
    </location>
    <ligand>
        <name>hybrid [4Fe-2O-2S] cluster</name>
        <dbReference type="ChEBI" id="CHEBI:60519"/>
    </ligand>
</feature>
<feature type="binding site" evidence="1">
    <location>
        <position position="515"/>
    </location>
    <ligand>
        <name>hybrid [4Fe-2O-2S] cluster</name>
        <dbReference type="ChEBI" id="CHEBI:60519"/>
    </ligand>
</feature>
<feature type="modified residue" description="Cysteine persulfide" evidence="1">
    <location>
        <position position="425"/>
    </location>
</feature>
<comment type="function">
    <text evidence="1">Catalyzes the reduction of hydroxylamine to form NH(3) and H(2)O.</text>
</comment>
<comment type="catalytic activity">
    <reaction evidence="1">
        <text>A + NH4(+) + H2O = hydroxylamine + AH2 + H(+)</text>
        <dbReference type="Rhea" id="RHEA:22052"/>
        <dbReference type="ChEBI" id="CHEBI:13193"/>
        <dbReference type="ChEBI" id="CHEBI:15377"/>
        <dbReference type="ChEBI" id="CHEBI:15378"/>
        <dbReference type="ChEBI" id="CHEBI:15429"/>
        <dbReference type="ChEBI" id="CHEBI:17499"/>
        <dbReference type="ChEBI" id="CHEBI:28938"/>
        <dbReference type="EC" id="1.7.99.1"/>
    </reaction>
</comment>
<comment type="cofactor">
    <cofactor evidence="1">
        <name>[4Fe-4S] cluster</name>
        <dbReference type="ChEBI" id="CHEBI:49883"/>
    </cofactor>
    <text evidence="1">Binds 1 [4Fe-4S] cluster.</text>
</comment>
<comment type="cofactor">
    <cofactor evidence="1">
        <name>hybrid [4Fe-2O-2S] cluster</name>
        <dbReference type="ChEBI" id="CHEBI:60519"/>
    </cofactor>
    <text evidence="1">Binds 1 hybrid [4Fe-2O-2S] cluster.</text>
</comment>
<comment type="subcellular location">
    <subcellularLocation>
        <location evidence="1">Cytoplasm</location>
    </subcellularLocation>
</comment>
<comment type="similarity">
    <text evidence="1">Belongs to the HCP family.</text>
</comment>
<gene>
    <name evidence="1" type="primary">hcp</name>
    <name type="ordered locus">CLK_2177</name>
</gene>